<name>PECT_DICD3</name>
<gene>
    <name type="primary">pecT</name>
    <name type="ordered locus">Dda3937_00364</name>
</gene>
<protein>
    <recommendedName>
        <fullName>HTH-type transcriptional regulator PecT</fullName>
    </recommendedName>
    <alternativeName>
        <fullName>Pectinase gene transcriptional regulator</fullName>
    </alternativeName>
</protein>
<reference key="1">
    <citation type="journal article" date="1996" name="J. Bacteriol.">
        <title>The Erwinia chrysanthemi pecT gene regulates pectinase gene expression.</title>
        <authorList>
            <person name="Surgey N."/>
            <person name="Condemine G."/>
            <person name="Robert-Baudouy J."/>
        </authorList>
    </citation>
    <scope>NUCLEOTIDE SEQUENCE [GENOMIC DNA]</scope>
    <source>
        <strain>3937</strain>
    </source>
</reference>
<reference key="2">
    <citation type="journal article" date="2011" name="J. Bacteriol.">
        <title>Genome sequence of the plant-pathogenic bacterium Dickeya dadantii 3937.</title>
        <authorList>
            <person name="Glasner J.D."/>
            <person name="Yang C.H."/>
            <person name="Reverchon S."/>
            <person name="Hugouvieux-Cotte-Pattat N."/>
            <person name="Condemine G."/>
            <person name="Bohin J.P."/>
            <person name="Van Gijsegem F."/>
            <person name="Yang S."/>
            <person name="Franza T."/>
            <person name="Expert D."/>
            <person name="Plunkett G. III"/>
            <person name="San Francisco M.J."/>
            <person name="Charkowski A.O."/>
            <person name="Py B."/>
            <person name="Bell K."/>
            <person name="Rauscher L."/>
            <person name="Rodriguez-Palenzuela P."/>
            <person name="Toussaint A."/>
            <person name="Holeva M.C."/>
            <person name="He S.Y."/>
            <person name="Douet V."/>
            <person name="Boccara M."/>
            <person name="Blanco C."/>
            <person name="Toth I."/>
            <person name="Anderson B.D."/>
            <person name="Biehl B.S."/>
            <person name="Mau B."/>
            <person name="Flynn S.M."/>
            <person name="Barras F."/>
            <person name="Lindeberg M."/>
            <person name="Birch P.R."/>
            <person name="Tsuyumu S."/>
            <person name="Shi X."/>
            <person name="Hibbing M."/>
            <person name="Yap M.N."/>
            <person name="Carpentier M."/>
            <person name="Dassa E."/>
            <person name="Umehara M."/>
            <person name="Kim J.F."/>
            <person name="Rusch M."/>
            <person name="Soni P."/>
            <person name="Mayhew G.F."/>
            <person name="Fouts D.E."/>
            <person name="Gill S.R."/>
            <person name="Blattner F.R."/>
            <person name="Keen N.T."/>
            <person name="Perna N.T."/>
        </authorList>
    </citation>
    <scope>NUCLEOTIDE SEQUENCE [LARGE SCALE GENOMIC DNA]</scope>
    <source>
        <strain>3937</strain>
    </source>
</reference>
<sequence>MTNTSRPVLNLDLDLLRTFVAVADLNTFAAAAVAVCRTQSAVSQQMQRLEQLIGKELFARHGRNKLLTEHGIQFLGYARKILQFNDEACASLMYSDIQGTLTIGASDDTADTILPFILQRVTNVFPKLSIAVSIKRSAEMTDMLQQGKIDLVITTSNNDDLPHVLLRTSPTLWYCSADYQYQPGETVSLVVLDEPSPFRALALDQLTAAGIPWKISYVASTLSAVRAAVKAGLGITVRSVEMMSPELRVLGEEEGLPKLPDTRYYLCRNPDHDNELTNAIFSAIESGTRSHLLPVSTGTESELREPPTDESLKDIT</sequence>
<accession>P52662</accession>
<accession>E0SKI5</accession>
<organism>
    <name type="scientific">Dickeya dadantii (strain 3937)</name>
    <name type="common">Erwinia chrysanthemi (strain 3937)</name>
    <dbReference type="NCBI Taxonomy" id="198628"/>
    <lineage>
        <taxon>Bacteria</taxon>
        <taxon>Pseudomonadati</taxon>
        <taxon>Pseudomonadota</taxon>
        <taxon>Gammaproteobacteria</taxon>
        <taxon>Enterobacterales</taxon>
        <taxon>Pectobacteriaceae</taxon>
        <taxon>Dickeya</taxon>
    </lineage>
</organism>
<comment type="function">
    <text>Regulates pectinase gene expression.</text>
</comment>
<comment type="similarity">
    <text evidence="3">Belongs to the LysR transcriptional regulatory family.</text>
</comment>
<proteinExistence type="inferred from homology"/>
<evidence type="ECO:0000255" key="1">
    <source>
        <dbReference type="PROSITE-ProRule" id="PRU00253"/>
    </source>
</evidence>
<evidence type="ECO:0000256" key="2">
    <source>
        <dbReference type="SAM" id="MobiDB-lite"/>
    </source>
</evidence>
<evidence type="ECO:0000305" key="3"/>
<keyword id="KW-0238">DNA-binding</keyword>
<keyword id="KW-1185">Reference proteome</keyword>
<keyword id="KW-0804">Transcription</keyword>
<keyword id="KW-0805">Transcription regulation</keyword>
<feature type="chain" id="PRO_0000105742" description="HTH-type transcriptional regulator PecT">
    <location>
        <begin position="1"/>
        <end position="316"/>
    </location>
</feature>
<feature type="domain" description="HTH lysR-type" evidence="1">
    <location>
        <begin position="11"/>
        <end position="68"/>
    </location>
</feature>
<feature type="DNA-binding region" description="H-T-H motif" evidence="1">
    <location>
        <begin position="28"/>
        <end position="47"/>
    </location>
</feature>
<feature type="region of interest" description="Disordered" evidence="2">
    <location>
        <begin position="293"/>
        <end position="316"/>
    </location>
</feature>
<feature type="compositionally biased region" description="Basic and acidic residues" evidence="2">
    <location>
        <begin position="301"/>
        <end position="316"/>
    </location>
</feature>
<dbReference type="EMBL" id="X85985">
    <property type="protein sequence ID" value="CAA59973.1"/>
    <property type="molecule type" value="Genomic_DNA"/>
</dbReference>
<dbReference type="EMBL" id="CP002038">
    <property type="protein sequence ID" value="ADM99274.1"/>
    <property type="molecule type" value="Genomic_DNA"/>
</dbReference>
<dbReference type="RefSeq" id="WP_013318709.1">
    <property type="nucleotide sequence ID" value="NC_014500.1"/>
</dbReference>
<dbReference type="SMR" id="P52662"/>
<dbReference type="STRING" id="198628.Dda3937_00364"/>
<dbReference type="KEGG" id="ddd:Dda3937_00364"/>
<dbReference type="PATRIC" id="fig|198628.6.peg.3037"/>
<dbReference type="eggNOG" id="COG0583">
    <property type="taxonomic scope" value="Bacteria"/>
</dbReference>
<dbReference type="HOGENOM" id="CLU_039613_1_3_6"/>
<dbReference type="OrthoDB" id="5723059at2"/>
<dbReference type="Proteomes" id="UP000006859">
    <property type="component" value="Chromosome"/>
</dbReference>
<dbReference type="GO" id="GO:0003677">
    <property type="term" value="F:DNA binding"/>
    <property type="evidence" value="ECO:0007669"/>
    <property type="project" value="UniProtKB-KW"/>
</dbReference>
<dbReference type="GO" id="GO:0003700">
    <property type="term" value="F:DNA-binding transcription factor activity"/>
    <property type="evidence" value="ECO:0007669"/>
    <property type="project" value="InterPro"/>
</dbReference>
<dbReference type="CDD" id="cd08439">
    <property type="entry name" value="PBP2_LrhA_like"/>
    <property type="match status" value="1"/>
</dbReference>
<dbReference type="FunFam" id="1.10.10.10:FF:000112">
    <property type="entry name" value="HTH-type transcriptional regulator lrhA"/>
    <property type="match status" value="1"/>
</dbReference>
<dbReference type="FunFam" id="3.40.190.10:FF:000069">
    <property type="entry name" value="HTH-type transcriptional regulator lrhA"/>
    <property type="match status" value="1"/>
</dbReference>
<dbReference type="FunFam" id="3.40.190.10:FF:000042">
    <property type="entry name" value="LysR family transcriptional regulator"/>
    <property type="match status" value="1"/>
</dbReference>
<dbReference type="Gene3D" id="3.40.190.10">
    <property type="entry name" value="Periplasmic binding protein-like II"/>
    <property type="match status" value="2"/>
</dbReference>
<dbReference type="Gene3D" id="1.10.10.10">
    <property type="entry name" value="Winged helix-like DNA-binding domain superfamily/Winged helix DNA-binding domain"/>
    <property type="match status" value="1"/>
</dbReference>
<dbReference type="InterPro" id="IPR050176">
    <property type="entry name" value="LTTR"/>
</dbReference>
<dbReference type="InterPro" id="IPR005119">
    <property type="entry name" value="LysR_subst-bd"/>
</dbReference>
<dbReference type="InterPro" id="IPR000847">
    <property type="entry name" value="Tscrpt_reg_HTH_LysR"/>
</dbReference>
<dbReference type="InterPro" id="IPR036388">
    <property type="entry name" value="WH-like_DNA-bd_sf"/>
</dbReference>
<dbReference type="InterPro" id="IPR036390">
    <property type="entry name" value="WH_DNA-bd_sf"/>
</dbReference>
<dbReference type="NCBIfam" id="NF011673">
    <property type="entry name" value="PRK15092.1"/>
    <property type="match status" value="1"/>
</dbReference>
<dbReference type="PANTHER" id="PTHR30579:SF7">
    <property type="entry name" value="HTH-TYPE TRANSCRIPTIONAL REGULATOR LRHA-RELATED"/>
    <property type="match status" value="1"/>
</dbReference>
<dbReference type="PANTHER" id="PTHR30579">
    <property type="entry name" value="TRANSCRIPTIONAL REGULATOR"/>
    <property type="match status" value="1"/>
</dbReference>
<dbReference type="Pfam" id="PF00126">
    <property type="entry name" value="HTH_1"/>
    <property type="match status" value="1"/>
</dbReference>
<dbReference type="Pfam" id="PF03466">
    <property type="entry name" value="LysR_substrate"/>
    <property type="match status" value="1"/>
</dbReference>
<dbReference type="PRINTS" id="PR00039">
    <property type="entry name" value="HTHLYSR"/>
</dbReference>
<dbReference type="SUPFAM" id="SSF53850">
    <property type="entry name" value="Periplasmic binding protein-like II"/>
    <property type="match status" value="1"/>
</dbReference>
<dbReference type="SUPFAM" id="SSF46785">
    <property type="entry name" value="Winged helix' DNA-binding domain"/>
    <property type="match status" value="1"/>
</dbReference>
<dbReference type="PROSITE" id="PS50931">
    <property type="entry name" value="HTH_LYSR"/>
    <property type="match status" value="1"/>
</dbReference>